<organism>
    <name type="scientific">Shewanella baltica (strain OS195)</name>
    <dbReference type="NCBI Taxonomy" id="399599"/>
    <lineage>
        <taxon>Bacteria</taxon>
        <taxon>Pseudomonadati</taxon>
        <taxon>Pseudomonadota</taxon>
        <taxon>Gammaproteobacteria</taxon>
        <taxon>Alteromonadales</taxon>
        <taxon>Shewanellaceae</taxon>
        <taxon>Shewanella</taxon>
    </lineage>
</organism>
<proteinExistence type="inferred from homology"/>
<name>ISPF_SHEB9</name>
<reference key="1">
    <citation type="submission" date="2007-11" db="EMBL/GenBank/DDBJ databases">
        <title>Complete sequence of chromosome of Shewanella baltica OS195.</title>
        <authorList>
            <consortium name="US DOE Joint Genome Institute"/>
            <person name="Copeland A."/>
            <person name="Lucas S."/>
            <person name="Lapidus A."/>
            <person name="Barry K."/>
            <person name="Glavina del Rio T."/>
            <person name="Dalin E."/>
            <person name="Tice H."/>
            <person name="Pitluck S."/>
            <person name="Chain P."/>
            <person name="Malfatti S."/>
            <person name="Shin M."/>
            <person name="Vergez L."/>
            <person name="Schmutz J."/>
            <person name="Larimer F."/>
            <person name="Land M."/>
            <person name="Hauser L."/>
            <person name="Kyrpides N."/>
            <person name="Kim E."/>
            <person name="Brettar I."/>
            <person name="Rodrigues J."/>
            <person name="Konstantinidis K."/>
            <person name="Klappenbach J."/>
            <person name="Hofle M."/>
            <person name="Tiedje J."/>
            <person name="Richardson P."/>
        </authorList>
    </citation>
    <scope>NUCLEOTIDE SEQUENCE [LARGE SCALE GENOMIC DNA]</scope>
    <source>
        <strain>OS195</strain>
    </source>
</reference>
<gene>
    <name evidence="1" type="primary">ispF</name>
    <name type="ordered locus">Sbal195_3276</name>
</gene>
<accession>A9KYG7</accession>
<dbReference type="EC" id="4.6.1.12" evidence="1"/>
<dbReference type="EMBL" id="CP000891">
    <property type="protein sequence ID" value="ABX50438.1"/>
    <property type="molecule type" value="Genomic_DNA"/>
</dbReference>
<dbReference type="RefSeq" id="WP_011847437.1">
    <property type="nucleotide sequence ID" value="NC_009997.1"/>
</dbReference>
<dbReference type="SMR" id="A9KYG7"/>
<dbReference type="GeneID" id="11773329"/>
<dbReference type="KEGG" id="sbn:Sbal195_3276"/>
<dbReference type="HOGENOM" id="CLU_084630_2_0_6"/>
<dbReference type="UniPathway" id="UPA00056">
    <property type="reaction ID" value="UER00095"/>
</dbReference>
<dbReference type="Proteomes" id="UP000000770">
    <property type="component" value="Chromosome"/>
</dbReference>
<dbReference type="GO" id="GO:0008685">
    <property type="term" value="F:2-C-methyl-D-erythritol 2,4-cyclodiphosphate synthase activity"/>
    <property type="evidence" value="ECO:0007669"/>
    <property type="project" value="UniProtKB-UniRule"/>
</dbReference>
<dbReference type="GO" id="GO:0046872">
    <property type="term" value="F:metal ion binding"/>
    <property type="evidence" value="ECO:0007669"/>
    <property type="project" value="UniProtKB-KW"/>
</dbReference>
<dbReference type="GO" id="GO:0019288">
    <property type="term" value="P:isopentenyl diphosphate biosynthetic process, methylerythritol 4-phosphate pathway"/>
    <property type="evidence" value="ECO:0007669"/>
    <property type="project" value="UniProtKB-UniRule"/>
</dbReference>
<dbReference type="GO" id="GO:0016114">
    <property type="term" value="P:terpenoid biosynthetic process"/>
    <property type="evidence" value="ECO:0007669"/>
    <property type="project" value="InterPro"/>
</dbReference>
<dbReference type="CDD" id="cd00554">
    <property type="entry name" value="MECDP_synthase"/>
    <property type="match status" value="1"/>
</dbReference>
<dbReference type="FunFam" id="3.30.1330.50:FF:000001">
    <property type="entry name" value="2-C-methyl-D-erythritol 2,4-cyclodiphosphate synthase"/>
    <property type="match status" value="1"/>
</dbReference>
<dbReference type="Gene3D" id="3.30.1330.50">
    <property type="entry name" value="2-C-methyl-D-erythritol 2,4-cyclodiphosphate synthase"/>
    <property type="match status" value="1"/>
</dbReference>
<dbReference type="HAMAP" id="MF_00107">
    <property type="entry name" value="IspF"/>
    <property type="match status" value="1"/>
</dbReference>
<dbReference type="InterPro" id="IPR003526">
    <property type="entry name" value="MECDP_synthase"/>
</dbReference>
<dbReference type="InterPro" id="IPR020555">
    <property type="entry name" value="MECDP_synthase_CS"/>
</dbReference>
<dbReference type="InterPro" id="IPR036571">
    <property type="entry name" value="MECDP_synthase_sf"/>
</dbReference>
<dbReference type="NCBIfam" id="TIGR00151">
    <property type="entry name" value="ispF"/>
    <property type="match status" value="1"/>
</dbReference>
<dbReference type="PANTHER" id="PTHR43181">
    <property type="entry name" value="2-C-METHYL-D-ERYTHRITOL 2,4-CYCLODIPHOSPHATE SYNTHASE, CHLOROPLASTIC"/>
    <property type="match status" value="1"/>
</dbReference>
<dbReference type="PANTHER" id="PTHR43181:SF1">
    <property type="entry name" value="2-C-METHYL-D-ERYTHRITOL 2,4-CYCLODIPHOSPHATE SYNTHASE, CHLOROPLASTIC"/>
    <property type="match status" value="1"/>
</dbReference>
<dbReference type="Pfam" id="PF02542">
    <property type="entry name" value="YgbB"/>
    <property type="match status" value="1"/>
</dbReference>
<dbReference type="SUPFAM" id="SSF69765">
    <property type="entry name" value="IpsF-like"/>
    <property type="match status" value="1"/>
</dbReference>
<dbReference type="PROSITE" id="PS01350">
    <property type="entry name" value="ISPF"/>
    <property type="match status" value="1"/>
</dbReference>
<protein>
    <recommendedName>
        <fullName evidence="1">2-C-methyl-D-erythritol 2,4-cyclodiphosphate synthase</fullName>
        <shortName evidence="1">MECDP-synthase</shortName>
        <shortName evidence="1">MECPP-synthase</shortName>
        <shortName evidence="1">MECPS</shortName>
        <ecNumber evidence="1">4.6.1.12</ecNumber>
    </recommendedName>
</protein>
<comment type="function">
    <text evidence="1">Involved in the biosynthesis of isopentenyl diphosphate (IPP) and dimethylallyl diphosphate (DMAPP), two major building blocks of isoprenoid compounds. Catalyzes the conversion of 4-diphosphocytidyl-2-C-methyl-D-erythritol 2-phosphate (CDP-ME2P) to 2-C-methyl-D-erythritol 2,4-cyclodiphosphate (ME-CPP) with a corresponding release of cytidine 5-monophosphate (CMP).</text>
</comment>
<comment type="catalytic activity">
    <reaction evidence="1">
        <text>4-CDP-2-C-methyl-D-erythritol 2-phosphate = 2-C-methyl-D-erythritol 2,4-cyclic diphosphate + CMP</text>
        <dbReference type="Rhea" id="RHEA:23864"/>
        <dbReference type="ChEBI" id="CHEBI:57919"/>
        <dbReference type="ChEBI" id="CHEBI:58483"/>
        <dbReference type="ChEBI" id="CHEBI:60377"/>
        <dbReference type="EC" id="4.6.1.12"/>
    </reaction>
</comment>
<comment type="cofactor">
    <cofactor evidence="1">
        <name>a divalent metal cation</name>
        <dbReference type="ChEBI" id="CHEBI:60240"/>
    </cofactor>
    <text evidence="1">Binds 1 divalent metal cation per subunit.</text>
</comment>
<comment type="pathway">
    <text evidence="1">Isoprenoid biosynthesis; isopentenyl diphosphate biosynthesis via DXP pathway; isopentenyl diphosphate from 1-deoxy-D-xylulose 5-phosphate: step 4/6.</text>
</comment>
<comment type="subunit">
    <text evidence="1">Homotrimer.</text>
</comment>
<comment type="similarity">
    <text evidence="1">Belongs to the IspF family.</text>
</comment>
<evidence type="ECO:0000255" key="1">
    <source>
        <dbReference type="HAMAP-Rule" id="MF_00107"/>
    </source>
</evidence>
<sequence length="161" mass="17265">MKIRIGHGFDVHKFGAARPLILCGVEVPYETGLIAHSDGDVVLHAISDAILGALALGDIGKHFPDTDTAYKGADSRVLLRHCYALARAKGFVLGNLDVTIIAQAPKMAPHIEAMRQILAADLTSELDDINVKATTTEQLGFTGRKEGIAVEAVVLMTRKHD</sequence>
<keyword id="KW-0414">Isoprene biosynthesis</keyword>
<keyword id="KW-0456">Lyase</keyword>
<keyword id="KW-0479">Metal-binding</keyword>
<feature type="chain" id="PRO_1000075921" description="2-C-methyl-D-erythritol 2,4-cyclodiphosphate synthase">
    <location>
        <begin position="1"/>
        <end position="161"/>
    </location>
</feature>
<feature type="binding site" evidence="1">
    <location>
        <begin position="10"/>
        <end position="12"/>
    </location>
    <ligand>
        <name>4-CDP-2-C-methyl-D-erythritol 2-phosphate</name>
        <dbReference type="ChEBI" id="CHEBI:57919"/>
    </ligand>
</feature>
<feature type="binding site" evidence="1">
    <location>
        <position position="10"/>
    </location>
    <ligand>
        <name>a divalent metal cation</name>
        <dbReference type="ChEBI" id="CHEBI:60240"/>
    </ligand>
</feature>
<feature type="binding site" evidence="1">
    <location>
        <position position="12"/>
    </location>
    <ligand>
        <name>a divalent metal cation</name>
        <dbReference type="ChEBI" id="CHEBI:60240"/>
    </ligand>
</feature>
<feature type="binding site" evidence="1">
    <location>
        <begin position="36"/>
        <end position="37"/>
    </location>
    <ligand>
        <name>4-CDP-2-C-methyl-D-erythritol 2-phosphate</name>
        <dbReference type="ChEBI" id="CHEBI:57919"/>
    </ligand>
</feature>
<feature type="binding site" evidence="1">
    <location>
        <position position="44"/>
    </location>
    <ligand>
        <name>a divalent metal cation</name>
        <dbReference type="ChEBI" id="CHEBI:60240"/>
    </ligand>
</feature>
<feature type="binding site" evidence="1">
    <location>
        <begin position="58"/>
        <end position="60"/>
    </location>
    <ligand>
        <name>4-CDP-2-C-methyl-D-erythritol 2-phosphate</name>
        <dbReference type="ChEBI" id="CHEBI:57919"/>
    </ligand>
</feature>
<feature type="binding site" evidence="1">
    <location>
        <begin position="63"/>
        <end position="67"/>
    </location>
    <ligand>
        <name>4-CDP-2-C-methyl-D-erythritol 2-phosphate</name>
        <dbReference type="ChEBI" id="CHEBI:57919"/>
    </ligand>
</feature>
<feature type="binding site" evidence="1">
    <location>
        <begin position="102"/>
        <end position="108"/>
    </location>
    <ligand>
        <name>4-CDP-2-C-methyl-D-erythritol 2-phosphate</name>
        <dbReference type="ChEBI" id="CHEBI:57919"/>
    </ligand>
</feature>
<feature type="binding site" evidence="1">
    <location>
        <begin position="134"/>
        <end position="137"/>
    </location>
    <ligand>
        <name>4-CDP-2-C-methyl-D-erythritol 2-phosphate</name>
        <dbReference type="ChEBI" id="CHEBI:57919"/>
    </ligand>
</feature>
<feature type="binding site" evidence="1">
    <location>
        <position position="141"/>
    </location>
    <ligand>
        <name>4-CDP-2-C-methyl-D-erythritol 2-phosphate</name>
        <dbReference type="ChEBI" id="CHEBI:57919"/>
    </ligand>
</feature>
<feature type="binding site" evidence="1">
    <location>
        <position position="144"/>
    </location>
    <ligand>
        <name>4-CDP-2-C-methyl-D-erythritol 2-phosphate</name>
        <dbReference type="ChEBI" id="CHEBI:57919"/>
    </ligand>
</feature>
<feature type="site" description="Transition state stabilizer" evidence="1">
    <location>
        <position position="36"/>
    </location>
</feature>
<feature type="site" description="Transition state stabilizer" evidence="1">
    <location>
        <position position="135"/>
    </location>
</feature>